<accession>C6DBD8</accession>
<sequence length="135" mass="15278">MAGSARSAMAAKALQTILNIGLLVLATILVIFLVKETFHLAKVLLISNEKDSSYQLIEGIVIYFLYFEFIALIVKYFQSGYHFPLRYFIYIGITAIIRLIIVDHKSPSDTLMYSAAILLLVVTLYLANSNRLKRE</sequence>
<protein>
    <recommendedName>
        <fullName evidence="1">Protein PsiE homolog</fullName>
    </recommendedName>
</protein>
<name>PSIE_PECCP</name>
<gene>
    <name evidence="1" type="primary">psiE</name>
    <name type="ordered locus">PC1_2978</name>
</gene>
<dbReference type="EMBL" id="CP001657">
    <property type="protein sequence ID" value="ACT14001.1"/>
    <property type="molecule type" value="Genomic_DNA"/>
</dbReference>
<dbReference type="RefSeq" id="WP_015841156.1">
    <property type="nucleotide sequence ID" value="NC_012917.1"/>
</dbReference>
<dbReference type="SMR" id="C6DBD8"/>
<dbReference type="STRING" id="561230.PC1_2978"/>
<dbReference type="GeneID" id="67793176"/>
<dbReference type="KEGG" id="pct:PC1_2978"/>
<dbReference type="eggNOG" id="COG3223">
    <property type="taxonomic scope" value="Bacteria"/>
</dbReference>
<dbReference type="HOGENOM" id="CLU_127561_0_0_6"/>
<dbReference type="OrthoDB" id="9792470at2"/>
<dbReference type="Proteomes" id="UP000002736">
    <property type="component" value="Chromosome"/>
</dbReference>
<dbReference type="GO" id="GO:0005886">
    <property type="term" value="C:plasma membrane"/>
    <property type="evidence" value="ECO:0007669"/>
    <property type="project" value="UniProtKB-SubCell"/>
</dbReference>
<dbReference type="GO" id="GO:0016036">
    <property type="term" value="P:cellular response to phosphate starvation"/>
    <property type="evidence" value="ECO:0007669"/>
    <property type="project" value="InterPro"/>
</dbReference>
<dbReference type="HAMAP" id="MF_01048">
    <property type="entry name" value="PsiE"/>
    <property type="match status" value="1"/>
</dbReference>
<dbReference type="InterPro" id="IPR009315">
    <property type="entry name" value="P_starv_induced_PsiE"/>
</dbReference>
<dbReference type="InterPro" id="IPR020948">
    <property type="entry name" value="P_starv_induced_PsiE-like"/>
</dbReference>
<dbReference type="NCBIfam" id="NF002764">
    <property type="entry name" value="PRK02833.1-2"/>
    <property type="match status" value="1"/>
</dbReference>
<dbReference type="NCBIfam" id="NF002765">
    <property type="entry name" value="PRK02833.1-3"/>
    <property type="match status" value="1"/>
</dbReference>
<dbReference type="PANTHER" id="PTHR37819">
    <property type="entry name" value="PROTEIN PSIE"/>
    <property type="match status" value="1"/>
</dbReference>
<dbReference type="PANTHER" id="PTHR37819:SF1">
    <property type="entry name" value="PROTEIN PSIE"/>
    <property type="match status" value="1"/>
</dbReference>
<dbReference type="Pfam" id="PF06146">
    <property type="entry name" value="PsiE"/>
    <property type="match status" value="1"/>
</dbReference>
<dbReference type="PIRSF" id="PIRSF029598">
    <property type="entry name" value="PsiE"/>
    <property type="match status" value="1"/>
</dbReference>
<proteinExistence type="inferred from homology"/>
<reference key="1">
    <citation type="submission" date="2009-07" db="EMBL/GenBank/DDBJ databases">
        <title>Complete sequence of Pectobacterium carotovorum subsp. carotovorum PC1.</title>
        <authorList>
            <consortium name="US DOE Joint Genome Institute"/>
            <person name="Lucas S."/>
            <person name="Copeland A."/>
            <person name="Lapidus A."/>
            <person name="Glavina del Rio T."/>
            <person name="Tice H."/>
            <person name="Bruce D."/>
            <person name="Goodwin L."/>
            <person name="Pitluck S."/>
            <person name="Munk A.C."/>
            <person name="Brettin T."/>
            <person name="Detter J.C."/>
            <person name="Han C."/>
            <person name="Tapia R."/>
            <person name="Larimer F."/>
            <person name="Land M."/>
            <person name="Hauser L."/>
            <person name="Kyrpides N."/>
            <person name="Mikhailova N."/>
            <person name="Balakrishnan V."/>
            <person name="Glasner J."/>
            <person name="Perna N.T."/>
        </authorList>
    </citation>
    <scope>NUCLEOTIDE SEQUENCE [LARGE SCALE GENOMIC DNA]</scope>
    <source>
        <strain>PC1</strain>
    </source>
</reference>
<feature type="chain" id="PRO_1000213428" description="Protein PsiE homolog">
    <location>
        <begin position="1"/>
        <end position="135"/>
    </location>
</feature>
<feature type="transmembrane region" description="Helical" evidence="1">
    <location>
        <begin position="14"/>
        <end position="34"/>
    </location>
</feature>
<feature type="transmembrane region" description="Helical" evidence="1">
    <location>
        <begin position="54"/>
        <end position="74"/>
    </location>
</feature>
<feature type="transmembrane region" description="Helical" evidence="1">
    <location>
        <begin position="82"/>
        <end position="102"/>
    </location>
</feature>
<feature type="transmembrane region" description="Helical" evidence="1">
    <location>
        <begin position="107"/>
        <end position="127"/>
    </location>
</feature>
<keyword id="KW-0997">Cell inner membrane</keyword>
<keyword id="KW-1003">Cell membrane</keyword>
<keyword id="KW-0472">Membrane</keyword>
<keyword id="KW-0812">Transmembrane</keyword>
<keyword id="KW-1133">Transmembrane helix</keyword>
<evidence type="ECO:0000255" key="1">
    <source>
        <dbReference type="HAMAP-Rule" id="MF_01048"/>
    </source>
</evidence>
<comment type="subcellular location">
    <subcellularLocation>
        <location evidence="1">Cell inner membrane</location>
        <topology evidence="1">Multi-pass membrane protein</topology>
    </subcellularLocation>
</comment>
<comment type="similarity">
    <text evidence="1">Belongs to the PsiE family.</text>
</comment>
<organism>
    <name type="scientific">Pectobacterium carotovorum subsp. carotovorum (strain PC1)</name>
    <dbReference type="NCBI Taxonomy" id="561230"/>
    <lineage>
        <taxon>Bacteria</taxon>
        <taxon>Pseudomonadati</taxon>
        <taxon>Pseudomonadota</taxon>
        <taxon>Gammaproteobacteria</taxon>
        <taxon>Enterobacterales</taxon>
        <taxon>Pectobacteriaceae</taxon>
        <taxon>Pectobacterium</taxon>
    </lineage>
</organism>